<proteinExistence type="predicted"/>
<accession>P27642</accession>
<gene>
    <name type="primary">spoVAA</name>
</gene>
<name>SP51_BACLI</name>
<organism>
    <name type="scientific">Bacillus licheniformis</name>
    <dbReference type="NCBI Taxonomy" id="1402"/>
    <lineage>
        <taxon>Bacteria</taxon>
        <taxon>Bacillati</taxon>
        <taxon>Bacillota</taxon>
        <taxon>Bacilli</taxon>
        <taxon>Bacillales</taxon>
        <taxon>Bacillaceae</taxon>
        <taxon>Bacillus</taxon>
    </lineage>
</organism>
<reference key="1">
    <citation type="journal article" date="1991" name="J. Gen. Microbiol.">
        <title>Identification of the promoter and the transcriptional start site of the spoVA operon of Bacillus subtilis and Bacillus licheniformis.</title>
        <authorList>
            <person name="Moldover B."/>
            <person name="Piggot P.J."/>
            <person name="Yudkin M.D."/>
        </authorList>
    </citation>
    <scope>NUCLEOTIDE SEQUENCE [GENOMIC DNA]</scope>
    <source>
        <strain>ATCC 9789 / DSM 8785 / NBRC 12195 / NCIMB 6346 / NCTC 6346 / IMET 11025 / NRS 243</strain>
    </source>
</reference>
<sequence length="17" mass="2167">MERQVFIRLRHRLEADP</sequence>
<dbReference type="EMBL" id="X53991">
    <property type="protein sequence ID" value="CAA37938.1"/>
    <property type="molecule type" value="Genomic_DNA"/>
</dbReference>
<dbReference type="PIR" id="S16144">
    <property type="entry name" value="S16144"/>
</dbReference>
<dbReference type="GO" id="GO:0030435">
    <property type="term" value="P:sporulation resulting in formation of a cellular spore"/>
    <property type="evidence" value="ECO:0007669"/>
    <property type="project" value="UniProtKB-KW"/>
</dbReference>
<protein>
    <recommendedName>
        <fullName>Stage V sporulation protein AA</fullName>
    </recommendedName>
</protein>
<feature type="chain" id="PRO_0000072077" description="Stage V sporulation protein AA">
    <location>
        <begin position="1"/>
        <end position="17" status="greater than"/>
    </location>
</feature>
<feature type="non-terminal residue">
    <location>
        <position position="17"/>
    </location>
</feature>
<keyword id="KW-0749">Sporulation</keyword>